<accession>A0K4E0</accession>
<sequence>MVAVSGTQRTRTVSLARWAVYAGSVFAGAWLATQLFYLAQIALWLFVNPGSTAFMRTDAWWLSRDTPPAQIRHQWVPYDQISRNLKRALIASEDSTFATNNGYDVDAILQAWEKNKARGRIVAGGSTITQQLARNLFLSREKSYIRKGQELIITWMLETVLDKERIFEIYLNSVEWGRGVYGAEAAARYYYKIPASRLGAWQSARLAVMLPKPRWFDAHRGSAYQAQRAAVIARRMGAAELPQSE</sequence>
<reference key="1">
    <citation type="submission" date="2006-08" db="EMBL/GenBank/DDBJ databases">
        <title>Complete sequence of chromosome 1 of Burkholderia cenocepacia HI2424.</title>
        <authorList>
            <person name="Copeland A."/>
            <person name="Lucas S."/>
            <person name="Lapidus A."/>
            <person name="Barry K."/>
            <person name="Detter J.C."/>
            <person name="Glavina del Rio T."/>
            <person name="Hammon N."/>
            <person name="Israni S."/>
            <person name="Pitluck S."/>
            <person name="Chain P."/>
            <person name="Malfatti S."/>
            <person name="Shin M."/>
            <person name="Vergez L."/>
            <person name="Schmutz J."/>
            <person name="Larimer F."/>
            <person name="Land M."/>
            <person name="Hauser L."/>
            <person name="Kyrpides N."/>
            <person name="Kim E."/>
            <person name="LiPuma J.J."/>
            <person name="Gonzalez C.F."/>
            <person name="Konstantinidis K."/>
            <person name="Tiedje J.M."/>
            <person name="Richardson P."/>
        </authorList>
    </citation>
    <scope>NUCLEOTIDE SEQUENCE [LARGE SCALE GENOMIC DNA]</scope>
    <source>
        <strain>HI2424</strain>
    </source>
</reference>
<dbReference type="EC" id="2.4.99.28" evidence="1"/>
<dbReference type="EMBL" id="CP000458">
    <property type="protein sequence ID" value="ABK07367.1"/>
    <property type="molecule type" value="Genomic_DNA"/>
</dbReference>
<dbReference type="RefSeq" id="WP_011544539.1">
    <property type="nucleotide sequence ID" value="NC_008542.1"/>
</dbReference>
<dbReference type="SMR" id="A0K4E0"/>
<dbReference type="CAZy" id="GT51">
    <property type="family name" value="Glycosyltransferase Family 51"/>
</dbReference>
<dbReference type="KEGG" id="bch:Bcen2424_0614"/>
<dbReference type="HOGENOM" id="CLU_006354_1_0_4"/>
<dbReference type="UniPathway" id="UPA00219"/>
<dbReference type="GO" id="GO:0009274">
    <property type="term" value="C:peptidoglycan-based cell wall"/>
    <property type="evidence" value="ECO:0007669"/>
    <property type="project" value="InterPro"/>
</dbReference>
<dbReference type="GO" id="GO:0005886">
    <property type="term" value="C:plasma membrane"/>
    <property type="evidence" value="ECO:0007669"/>
    <property type="project" value="UniProtKB-SubCell"/>
</dbReference>
<dbReference type="GO" id="GO:0016763">
    <property type="term" value="F:pentosyltransferase activity"/>
    <property type="evidence" value="ECO:0007669"/>
    <property type="project" value="InterPro"/>
</dbReference>
<dbReference type="GO" id="GO:0008955">
    <property type="term" value="F:peptidoglycan glycosyltransferase activity"/>
    <property type="evidence" value="ECO:0007669"/>
    <property type="project" value="UniProtKB-UniRule"/>
</dbReference>
<dbReference type="GO" id="GO:0071555">
    <property type="term" value="P:cell wall organization"/>
    <property type="evidence" value="ECO:0007669"/>
    <property type="project" value="UniProtKB-KW"/>
</dbReference>
<dbReference type="GO" id="GO:0009252">
    <property type="term" value="P:peptidoglycan biosynthetic process"/>
    <property type="evidence" value="ECO:0007669"/>
    <property type="project" value="UniProtKB-UniRule"/>
</dbReference>
<dbReference type="GO" id="GO:0008360">
    <property type="term" value="P:regulation of cell shape"/>
    <property type="evidence" value="ECO:0007669"/>
    <property type="project" value="UniProtKB-KW"/>
</dbReference>
<dbReference type="Gene3D" id="1.10.3810.10">
    <property type="entry name" value="Biosynthetic peptidoglycan transglycosylase-like"/>
    <property type="match status" value="1"/>
</dbReference>
<dbReference type="HAMAP" id="MF_00766">
    <property type="entry name" value="PGT_MtgA"/>
    <property type="match status" value="1"/>
</dbReference>
<dbReference type="InterPro" id="IPR001264">
    <property type="entry name" value="Glyco_trans_51"/>
</dbReference>
<dbReference type="InterPro" id="IPR023346">
    <property type="entry name" value="Lysozyme-like_dom_sf"/>
</dbReference>
<dbReference type="InterPro" id="IPR036950">
    <property type="entry name" value="PBP_transglycosylase"/>
</dbReference>
<dbReference type="InterPro" id="IPR011812">
    <property type="entry name" value="Pep_trsgly"/>
</dbReference>
<dbReference type="NCBIfam" id="TIGR02070">
    <property type="entry name" value="mono_pep_trsgly"/>
    <property type="match status" value="1"/>
</dbReference>
<dbReference type="PANTHER" id="PTHR30400:SF0">
    <property type="entry name" value="BIOSYNTHETIC PEPTIDOGLYCAN TRANSGLYCOSYLASE"/>
    <property type="match status" value="1"/>
</dbReference>
<dbReference type="PANTHER" id="PTHR30400">
    <property type="entry name" value="MONOFUNCTIONAL BIOSYNTHETIC PEPTIDOGLYCAN TRANSGLYCOSYLASE"/>
    <property type="match status" value="1"/>
</dbReference>
<dbReference type="Pfam" id="PF00912">
    <property type="entry name" value="Transgly"/>
    <property type="match status" value="1"/>
</dbReference>
<dbReference type="SUPFAM" id="SSF53955">
    <property type="entry name" value="Lysozyme-like"/>
    <property type="match status" value="1"/>
</dbReference>
<organism>
    <name type="scientific">Burkholderia cenocepacia (strain HI2424)</name>
    <dbReference type="NCBI Taxonomy" id="331272"/>
    <lineage>
        <taxon>Bacteria</taxon>
        <taxon>Pseudomonadati</taxon>
        <taxon>Pseudomonadota</taxon>
        <taxon>Betaproteobacteria</taxon>
        <taxon>Burkholderiales</taxon>
        <taxon>Burkholderiaceae</taxon>
        <taxon>Burkholderia</taxon>
        <taxon>Burkholderia cepacia complex</taxon>
    </lineage>
</organism>
<name>MTGA_BURCH</name>
<feature type="chain" id="PRO_1000017300" description="Biosynthetic peptidoglycan transglycosylase">
    <location>
        <begin position="1"/>
        <end position="245"/>
    </location>
</feature>
<feature type="transmembrane region" description="Helical" evidence="1">
    <location>
        <begin position="20"/>
        <end position="42"/>
    </location>
</feature>
<protein>
    <recommendedName>
        <fullName evidence="1">Biosynthetic peptidoglycan transglycosylase</fullName>
        <ecNumber evidence="1">2.4.99.28</ecNumber>
    </recommendedName>
    <alternativeName>
        <fullName evidence="1">Glycan polymerase</fullName>
    </alternativeName>
    <alternativeName>
        <fullName evidence="1">Peptidoglycan glycosyltransferase MtgA</fullName>
        <shortName evidence="1">PGT</shortName>
    </alternativeName>
</protein>
<evidence type="ECO:0000255" key="1">
    <source>
        <dbReference type="HAMAP-Rule" id="MF_00766"/>
    </source>
</evidence>
<gene>
    <name evidence="1" type="primary">mtgA</name>
    <name type="ordered locus">Bcen2424_0614</name>
</gene>
<comment type="function">
    <text evidence="1">Peptidoglycan polymerase that catalyzes glycan chain elongation from lipid-linked precursors.</text>
</comment>
<comment type="catalytic activity">
    <reaction evidence="1">
        <text>[GlcNAc-(1-&gt;4)-Mur2Ac(oyl-L-Ala-gamma-D-Glu-L-Lys-D-Ala-D-Ala)](n)-di-trans,octa-cis-undecaprenyl diphosphate + beta-D-GlcNAc-(1-&gt;4)-Mur2Ac(oyl-L-Ala-gamma-D-Glu-L-Lys-D-Ala-D-Ala)-di-trans,octa-cis-undecaprenyl diphosphate = [GlcNAc-(1-&gt;4)-Mur2Ac(oyl-L-Ala-gamma-D-Glu-L-Lys-D-Ala-D-Ala)](n+1)-di-trans,octa-cis-undecaprenyl diphosphate + di-trans,octa-cis-undecaprenyl diphosphate + H(+)</text>
        <dbReference type="Rhea" id="RHEA:23708"/>
        <dbReference type="Rhea" id="RHEA-COMP:9602"/>
        <dbReference type="Rhea" id="RHEA-COMP:9603"/>
        <dbReference type="ChEBI" id="CHEBI:15378"/>
        <dbReference type="ChEBI" id="CHEBI:58405"/>
        <dbReference type="ChEBI" id="CHEBI:60033"/>
        <dbReference type="ChEBI" id="CHEBI:78435"/>
        <dbReference type="EC" id="2.4.99.28"/>
    </reaction>
</comment>
<comment type="pathway">
    <text evidence="1">Cell wall biogenesis; peptidoglycan biosynthesis.</text>
</comment>
<comment type="subcellular location">
    <subcellularLocation>
        <location evidence="1">Cell inner membrane</location>
        <topology evidence="1">Single-pass membrane protein</topology>
    </subcellularLocation>
</comment>
<comment type="similarity">
    <text evidence="1">Belongs to the glycosyltransferase 51 family.</text>
</comment>
<keyword id="KW-0997">Cell inner membrane</keyword>
<keyword id="KW-1003">Cell membrane</keyword>
<keyword id="KW-0133">Cell shape</keyword>
<keyword id="KW-0961">Cell wall biogenesis/degradation</keyword>
<keyword id="KW-0328">Glycosyltransferase</keyword>
<keyword id="KW-0472">Membrane</keyword>
<keyword id="KW-0573">Peptidoglycan synthesis</keyword>
<keyword id="KW-0808">Transferase</keyword>
<keyword id="KW-0812">Transmembrane</keyword>
<keyword id="KW-1133">Transmembrane helix</keyword>
<proteinExistence type="inferred from homology"/>